<organism>
    <name type="scientific">Bos taurus</name>
    <name type="common">Bovine</name>
    <dbReference type="NCBI Taxonomy" id="9913"/>
    <lineage>
        <taxon>Eukaryota</taxon>
        <taxon>Metazoa</taxon>
        <taxon>Chordata</taxon>
        <taxon>Craniata</taxon>
        <taxon>Vertebrata</taxon>
        <taxon>Euteleostomi</taxon>
        <taxon>Mammalia</taxon>
        <taxon>Eutheria</taxon>
        <taxon>Laurasiatheria</taxon>
        <taxon>Artiodactyla</taxon>
        <taxon>Ruminantia</taxon>
        <taxon>Pecora</taxon>
        <taxon>Bovidae</taxon>
        <taxon>Bovinae</taxon>
        <taxon>Bos</taxon>
    </lineage>
</organism>
<sequence length="129" mass="14713">MKSVQFCFLFCCWRAICCRSCELTNITITVEKEECGFCISINTTWCAGYCYTRDLVYRDPARPNIQKTCTFKELVYETVKVPGCAHHADSLYTYPVATECHCSKCDSDSTDCTVRGLGPSYCSFREIKE</sequence>
<accession>P04837</accession>
<keyword id="KW-1015">Disulfide bond</keyword>
<keyword id="KW-0325">Glycoprotein</keyword>
<keyword id="KW-0372">Hormone</keyword>
<keyword id="KW-1185">Reference proteome</keyword>
<keyword id="KW-0964">Secreted</keyword>
<keyword id="KW-0732">Signal</keyword>
<name>FSHB_BOVIN</name>
<reference key="1">
    <citation type="journal article" date="1986" name="Proc. Natl. Acad. Sci. U.S.A.">
        <title>Cloning and DNA sequence analysis of the cDNA for the precursor of the beta chain of bovine follicle stimulating hormone.</title>
        <authorList>
            <person name="Esch F.S."/>
            <person name="Mason A.J."/>
            <person name="Cooksey K."/>
            <person name="Mercado M."/>
            <person name="Shimasaki S."/>
        </authorList>
    </citation>
    <scope>NUCLEOTIDE SEQUENCE [MRNA]</scope>
</reference>
<reference key="2">
    <citation type="journal article" date="1986" name="DNA">
        <title>Isolation and nucleotide sequence analysis of a cloned cDNA encoding the beta-subunit of bovine follicle-stimulating hormone.</title>
        <authorList>
            <person name="Maurer R.A."/>
            <person name="Beck A."/>
        </authorList>
    </citation>
    <scope>NUCLEOTIDE SEQUENCE [MRNA]</scope>
</reference>
<reference key="3">
    <citation type="journal article" date="1988" name="DNA">
        <title>Nucleotide sequence of the bovine gene for follicle-stimulating hormone beta-subunit.</title>
        <authorList>
            <person name="Kim K.E."/>
            <person name="Gordon D.F."/>
            <person name="Maurer R.A."/>
        </authorList>
    </citation>
    <scope>NUCLEOTIDE SEQUENCE [GENOMIC DNA]</scope>
</reference>
<protein>
    <recommendedName>
        <fullName>Follitropin subunit beta</fullName>
    </recommendedName>
    <alternativeName>
        <fullName>Follicle-stimulating hormone beta subunit</fullName>
        <shortName>FSH-B</shortName>
        <shortName>FSH-beta</shortName>
    </alternativeName>
    <alternativeName>
        <fullName>Follitropin beta chain</fullName>
    </alternativeName>
</protein>
<proteinExistence type="evidence at transcript level"/>
<comment type="function">
    <text evidence="2">Together with the alpha chain CGA constitutes follitropin, the follicle-stimulating hormone, and provides its biological specificity to the hormone heterodimer. Binds FSHR, a G protein-coupled receptor, on target cells to activate downstream signaling pathways. Follitropin is involved in follicle development and spermatogenesis in reproductive organs.</text>
</comment>
<comment type="subunit">
    <text evidence="2">Heterodimer. The active follitropin is a heterodimer composed of an alpha chain/CGA shared with other hormones and a unique beta chain/FSHB shown here.</text>
</comment>
<comment type="subcellular location">
    <subcellularLocation>
        <location evidence="2">Secreted</location>
    </subcellularLocation>
    <text evidence="2">Efficient secretion requires dimerization with CGA.</text>
</comment>
<comment type="similarity">
    <text evidence="3">Belongs to the glycoprotein hormones subunit beta family.</text>
</comment>
<feature type="signal peptide" evidence="1">
    <location>
        <begin position="1"/>
        <end position="20"/>
    </location>
</feature>
<feature type="chain" id="PRO_0000011706" description="Follitropin subunit beta">
    <location>
        <begin position="21"/>
        <end position="129"/>
    </location>
</feature>
<feature type="glycosylation site" description="N-linked (GlcNAc...) asparagine" evidence="2">
    <location>
        <position position="25"/>
    </location>
</feature>
<feature type="glycosylation site" description="N-linked (GlcNAc...) asparagine" evidence="2">
    <location>
        <position position="42"/>
    </location>
</feature>
<feature type="disulfide bond" evidence="2">
    <location>
        <begin position="21"/>
        <end position="69"/>
    </location>
</feature>
<feature type="disulfide bond" evidence="2">
    <location>
        <begin position="35"/>
        <end position="84"/>
    </location>
</feature>
<feature type="disulfide bond" evidence="2">
    <location>
        <begin position="38"/>
        <end position="122"/>
    </location>
</feature>
<feature type="disulfide bond" evidence="2">
    <location>
        <begin position="46"/>
        <end position="100"/>
    </location>
</feature>
<feature type="disulfide bond" evidence="2">
    <location>
        <begin position="50"/>
        <end position="102"/>
    </location>
</feature>
<feature type="disulfide bond" evidence="2">
    <location>
        <begin position="105"/>
        <end position="112"/>
    </location>
</feature>
<dbReference type="EMBL" id="M13383">
    <property type="protein sequence ID" value="AAA30526.1"/>
    <property type="molecule type" value="mRNA"/>
</dbReference>
<dbReference type="EMBL" id="M14853">
    <property type="protein sequence ID" value="AAA30527.1"/>
    <property type="molecule type" value="mRNA"/>
</dbReference>
<dbReference type="EMBL" id="M83753">
    <property type="protein sequence ID" value="AAA30528.1"/>
    <property type="molecule type" value="Genomic_DNA"/>
</dbReference>
<dbReference type="PIR" id="A29816">
    <property type="entry name" value="A23550"/>
</dbReference>
<dbReference type="RefSeq" id="NP_776485.1">
    <property type="nucleotide sequence ID" value="NM_174060.1"/>
</dbReference>
<dbReference type="SMR" id="P04837"/>
<dbReference type="FunCoup" id="P04837">
    <property type="interactions" value="127"/>
</dbReference>
<dbReference type="STRING" id="9913.ENSBTAP00000014462"/>
<dbReference type="GlyConnect" id="164">
    <property type="glycosylation" value="2 N-Linked glycans"/>
</dbReference>
<dbReference type="GlyCosmos" id="P04837">
    <property type="glycosylation" value="2 sites, 2 glycans"/>
</dbReference>
<dbReference type="GlyGen" id="P04837">
    <property type="glycosylation" value="3 sites, 2 N-linked glycans (1 site)"/>
</dbReference>
<dbReference type="PaxDb" id="9913-ENSBTAP00000014462"/>
<dbReference type="Ensembl" id="ENSBTAT00000014462.4">
    <property type="protein sequence ID" value="ENSBTAP00000014462.3"/>
    <property type="gene ID" value="ENSBTAG00000010889.5"/>
</dbReference>
<dbReference type="GeneID" id="281171"/>
<dbReference type="KEGG" id="bta:281171"/>
<dbReference type="CTD" id="2488"/>
<dbReference type="VEuPathDB" id="HostDB:ENSBTAG00000010889"/>
<dbReference type="VGNC" id="VGNC:112643">
    <property type="gene designation" value="FSHB"/>
</dbReference>
<dbReference type="eggNOG" id="ENOG502S39C">
    <property type="taxonomic scope" value="Eukaryota"/>
</dbReference>
<dbReference type="GeneTree" id="ENSGT00940000160051"/>
<dbReference type="HOGENOM" id="CLU_126319_3_0_1"/>
<dbReference type="InParanoid" id="P04837"/>
<dbReference type="OMA" id="PVATGCH"/>
<dbReference type="OrthoDB" id="8453657at2759"/>
<dbReference type="TreeFam" id="TF332940"/>
<dbReference type="Reactome" id="R-BTA-209822">
    <property type="pathway name" value="Glycoprotein hormones"/>
</dbReference>
<dbReference type="Reactome" id="R-BTA-375281">
    <property type="pathway name" value="Hormone ligand-binding receptors"/>
</dbReference>
<dbReference type="Reactome" id="R-BTA-418555">
    <property type="pathway name" value="G alpha (s) signalling events"/>
</dbReference>
<dbReference type="Proteomes" id="UP000009136">
    <property type="component" value="Chromosome 15"/>
</dbReference>
<dbReference type="Bgee" id="ENSBTAG00000010889">
    <property type="expression patterns" value="Expressed in adenohypophysis and 22 other cell types or tissues"/>
</dbReference>
<dbReference type="GO" id="GO:0005737">
    <property type="term" value="C:cytoplasm"/>
    <property type="evidence" value="ECO:0000318"/>
    <property type="project" value="GO_Central"/>
</dbReference>
<dbReference type="GO" id="GO:0005615">
    <property type="term" value="C:extracellular space"/>
    <property type="evidence" value="ECO:0000250"/>
    <property type="project" value="UniProtKB"/>
</dbReference>
<dbReference type="GO" id="GO:0016914">
    <property type="term" value="C:follicle-stimulating hormone complex"/>
    <property type="evidence" value="ECO:0000250"/>
    <property type="project" value="UniProtKB"/>
</dbReference>
<dbReference type="GO" id="GO:0016913">
    <property type="term" value="F:follicle-stimulating hormone activity"/>
    <property type="evidence" value="ECO:0000250"/>
    <property type="project" value="UniProtKB"/>
</dbReference>
<dbReference type="GO" id="GO:0042699">
    <property type="term" value="P:follicle-stimulating hormone signaling pathway"/>
    <property type="evidence" value="ECO:0000318"/>
    <property type="project" value="GO_Central"/>
</dbReference>
<dbReference type="GO" id="GO:0007186">
    <property type="term" value="P:G protein-coupled receptor signaling pathway"/>
    <property type="evidence" value="ECO:0000250"/>
    <property type="project" value="UniProtKB"/>
</dbReference>
<dbReference type="GO" id="GO:0045780">
    <property type="term" value="P:positive regulation of bone resorption"/>
    <property type="evidence" value="ECO:0007669"/>
    <property type="project" value="Ensembl"/>
</dbReference>
<dbReference type="GO" id="GO:0010628">
    <property type="term" value="P:positive regulation of gene expression"/>
    <property type="evidence" value="ECO:0007669"/>
    <property type="project" value="Ensembl"/>
</dbReference>
<dbReference type="GO" id="GO:0010893">
    <property type="term" value="P:positive regulation of steroid biosynthetic process"/>
    <property type="evidence" value="ECO:0007669"/>
    <property type="project" value="Ensembl"/>
</dbReference>
<dbReference type="GO" id="GO:0045670">
    <property type="term" value="P:regulation of osteoclast differentiation"/>
    <property type="evidence" value="ECO:0007669"/>
    <property type="project" value="Ensembl"/>
</dbReference>
<dbReference type="GO" id="GO:0010469">
    <property type="term" value="P:regulation of signaling receptor activity"/>
    <property type="evidence" value="ECO:0000250"/>
    <property type="project" value="UniProtKB"/>
</dbReference>
<dbReference type="GO" id="GO:0060011">
    <property type="term" value="P:Sertoli cell proliferation"/>
    <property type="evidence" value="ECO:0007669"/>
    <property type="project" value="Ensembl"/>
</dbReference>
<dbReference type="GO" id="GO:0007283">
    <property type="term" value="P:spermatogenesis"/>
    <property type="evidence" value="ECO:0007669"/>
    <property type="project" value="Ensembl"/>
</dbReference>
<dbReference type="GO" id="GO:0007179">
    <property type="term" value="P:transforming growth factor beta receptor signaling pathway"/>
    <property type="evidence" value="ECO:0007669"/>
    <property type="project" value="Ensembl"/>
</dbReference>
<dbReference type="CDD" id="cd00069">
    <property type="entry name" value="GHB_like"/>
    <property type="match status" value="1"/>
</dbReference>
<dbReference type="FunFam" id="2.10.90.10:FF:000007">
    <property type="entry name" value="Luteinizing hormone beta subunit"/>
    <property type="match status" value="1"/>
</dbReference>
<dbReference type="Gene3D" id="2.10.90.10">
    <property type="entry name" value="Cystine-knot cytokines"/>
    <property type="match status" value="1"/>
</dbReference>
<dbReference type="InterPro" id="IPR029034">
    <property type="entry name" value="Cystine-knot_cytokine"/>
</dbReference>
<dbReference type="InterPro" id="IPR006208">
    <property type="entry name" value="Glyco_hormone_CN"/>
</dbReference>
<dbReference type="InterPro" id="IPR001545">
    <property type="entry name" value="Gonadotropin_bsu"/>
</dbReference>
<dbReference type="InterPro" id="IPR018245">
    <property type="entry name" value="Gonadotropin_bsu_CS"/>
</dbReference>
<dbReference type="PANTHER" id="PTHR11515:SF17">
    <property type="entry name" value="FOLLITROPIN SUBUNIT BETA"/>
    <property type="match status" value="1"/>
</dbReference>
<dbReference type="PANTHER" id="PTHR11515">
    <property type="entry name" value="GLYCOPROTEIN HORMONE BETA CHAIN"/>
    <property type="match status" value="1"/>
</dbReference>
<dbReference type="Pfam" id="PF00007">
    <property type="entry name" value="Cys_knot"/>
    <property type="match status" value="1"/>
</dbReference>
<dbReference type="SMART" id="SM00068">
    <property type="entry name" value="GHB"/>
    <property type="match status" value="1"/>
</dbReference>
<dbReference type="SUPFAM" id="SSF57501">
    <property type="entry name" value="Cystine-knot cytokines"/>
    <property type="match status" value="1"/>
</dbReference>
<dbReference type="PROSITE" id="PS00261">
    <property type="entry name" value="GLYCO_HORMONE_BETA_1"/>
    <property type="match status" value="1"/>
</dbReference>
<dbReference type="PROSITE" id="PS00689">
    <property type="entry name" value="GLYCO_HORMONE_BETA_2"/>
    <property type="match status" value="1"/>
</dbReference>
<evidence type="ECO:0000250" key="1"/>
<evidence type="ECO:0000250" key="2">
    <source>
        <dbReference type="UniProtKB" id="P01225"/>
    </source>
</evidence>
<evidence type="ECO:0000305" key="3"/>
<gene>
    <name type="primary">FSHB</name>
</gene>